<reference key="1">
    <citation type="journal article" date="2007" name="J. Bacteriol.">
        <title>Complete genome of acute rheumatic fever-associated serotype M5 Streptococcus pyogenes strain Manfredo.</title>
        <authorList>
            <person name="Holden M.T.G."/>
            <person name="Scott A."/>
            <person name="Cherevach I."/>
            <person name="Chillingworth T."/>
            <person name="Churcher C."/>
            <person name="Cronin A."/>
            <person name="Dowd L."/>
            <person name="Feltwell T."/>
            <person name="Hamlin N."/>
            <person name="Holroyd S."/>
            <person name="Jagels K."/>
            <person name="Moule S."/>
            <person name="Mungall K."/>
            <person name="Quail M.A."/>
            <person name="Price C."/>
            <person name="Rabbinowitsch E."/>
            <person name="Sharp S."/>
            <person name="Skelton J."/>
            <person name="Whitehead S."/>
            <person name="Barrell B.G."/>
            <person name="Kehoe M."/>
            <person name="Parkhill J."/>
        </authorList>
    </citation>
    <scope>NUCLEOTIDE SEQUENCE [LARGE SCALE GENOMIC DNA]</scope>
    <source>
        <strain>Manfredo</strain>
    </source>
</reference>
<feature type="chain" id="PRO_1000056205" description="Bifunctional protein GlmU">
    <location>
        <begin position="1"/>
        <end position="460"/>
    </location>
</feature>
<feature type="region of interest" description="Pyrophosphorylase" evidence="1">
    <location>
        <begin position="1"/>
        <end position="229"/>
    </location>
</feature>
<feature type="region of interest" description="Linker" evidence="1">
    <location>
        <begin position="230"/>
        <end position="250"/>
    </location>
</feature>
<feature type="region of interest" description="N-acetyltransferase" evidence="1">
    <location>
        <begin position="251"/>
        <end position="460"/>
    </location>
</feature>
<feature type="active site" description="Proton acceptor" evidence="1">
    <location>
        <position position="362"/>
    </location>
</feature>
<feature type="binding site" evidence="1">
    <location>
        <begin position="8"/>
        <end position="11"/>
    </location>
    <ligand>
        <name>UDP-N-acetyl-alpha-D-glucosamine</name>
        <dbReference type="ChEBI" id="CHEBI:57705"/>
    </ligand>
</feature>
<feature type="binding site" evidence="1">
    <location>
        <position position="22"/>
    </location>
    <ligand>
        <name>UDP-N-acetyl-alpha-D-glucosamine</name>
        <dbReference type="ChEBI" id="CHEBI:57705"/>
    </ligand>
</feature>
<feature type="binding site" evidence="1">
    <location>
        <position position="72"/>
    </location>
    <ligand>
        <name>UDP-N-acetyl-alpha-D-glucosamine</name>
        <dbReference type="ChEBI" id="CHEBI:57705"/>
    </ligand>
</feature>
<feature type="binding site" evidence="1">
    <location>
        <begin position="77"/>
        <end position="78"/>
    </location>
    <ligand>
        <name>UDP-N-acetyl-alpha-D-glucosamine</name>
        <dbReference type="ChEBI" id="CHEBI:57705"/>
    </ligand>
</feature>
<feature type="binding site" evidence="1">
    <location>
        <position position="102"/>
    </location>
    <ligand>
        <name>Mg(2+)</name>
        <dbReference type="ChEBI" id="CHEBI:18420"/>
    </ligand>
</feature>
<feature type="binding site" evidence="1">
    <location>
        <position position="139"/>
    </location>
    <ligand>
        <name>UDP-N-acetyl-alpha-D-glucosamine</name>
        <dbReference type="ChEBI" id="CHEBI:57705"/>
    </ligand>
</feature>
<feature type="binding site" evidence="1">
    <location>
        <position position="154"/>
    </location>
    <ligand>
        <name>UDP-N-acetyl-alpha-D-glucosamine</name>
        <dbReference type="ChEBI" id="CHEBI:57705"/>
    </ligand>
</feature>
<feature type="binding site" evidence="1">
    <location>
        <position position="169"/>
    </location>
    <ligand>
        <name>UDP-N-acetyl-alpha-D-glucosamine</name>
        <dbReference type="ChEBI" id="CHEBI:57705"/>
    </ligand>
</feature>
<feature type="binding site" evidence="1">
    <location>
        <position position="227"/>
    </location>
    <ligand>
        <name>Mg(2+)</name>
        <dbReference type="ChEBI" id="CHEBI:18420"/>
    </ligand>
</feature>
<feature type="binding site" evidence="1">
    <location>
        <position position="227"/>
    </location>
    <ligand>
        <name>UDP-N-acetyl-alpha-D-glucosamine</name>
        <dbReference type="ChEBI" id="CHEBI:57705"/>
    </ligand>
</feature>
<feature type="binding site" evidence="1">
    <location>
        <position position="332"/>
    </location>
    <ligand>
        <name>UDP-N-acetyl-alpha-D-glucosamine</name>
        <dbReference type="ChEBI" id="CHEBI:57705"/>
    </ligand>
</feature>
<feature type="binding site" evidence="1">
    <location>
        <position position="350"/>
    </location>
    <ligand>
        <name>UDP-N-acetyl-alpha-D-glucosamine</name>
        <dbReference type="ChEBI" id="CHEBI:57705"/>
    </ligand>
</feature>
<feature type="binding site" evidence="1">
    <location>
        <position position="365"/>
    </location>
    <ligand>
        <name>UDP-N-acetyl-alpha-D-glucosamine</name>
        <dbReference type="ChEBI" id="CHEBI:57705"/>
    </ligand>
</feature>
<feature type="binding site" evidence="1">
    <location>
        <position position="376"/>
    </location>
    <ligand>
        <name>UDP-N-acetyl-alpha-D-glucosamine</name>
        <dbReference type="ChEBI" id="CHEBI:57705"/>
    </ligand>
</feature>
<feature type="binding site" evidence="1">
    <location>
        <position position="379"/>
    </location>
    <ligand>
        <name>acetyl-CoA</name>
        <dbReference type="ChEBI" id="CHEBI:57288"/>
    </ligand>
</feature>
<feature type="binding site" evidence="1">
    <location>
        <begin position="385"/>
        <end position="386"/>
    </location>
    <ligand>
        <name>acetyl-CoA</name>
        <dbReference type="ChEBI" id="CHEBI:57288"/>
    </ligand>
</feature>
<feature type="binding site" evidence="1">
    <location>
        <position position="404"/>
    </location>
    <ligand>
        <name>acetyl-CoA</name>
        <dbReference type="ChEBI" id="CHEBI:57288"/>
    </ligand>
</feature>
<feature type="binding site" evidence="1">
    <location>
        <position position="422"/>
    </location>
    <ligand>
        <name>acetyl-CoA</name>
        <dbReference type="ChEBI" id="CHEBI:57288"/>
    </ligand>
</feature>
<feature type="binding site" evidence="1">
    <location>
        <position position="439"/>
    </location>
    <ligand>
        <name>acetyl-CoA</name>
        <dbReference type="ChEBI" id="CHEBI:57288"/>
    </ligand>
</feature>
<protein>
    <recommendedName>
        <fullName evidence="1">Bifunctional protein GlmU</fullName>
    </recommendedName>
    <domain>
        <recommendedName>
            <fullName evidence="1">UDP-N-acetylglucosamine pyrophosphorylase</fullName>
            <ecNumber evidence="1">2.7.7.23</ecNumber>
        </recommendedName>
        <alternativeName>
            <fullName evidence="1">N-acetylglucosamine-1-phosphate uridyltransferase</fullName>
        </alternativeName>
    </domain>
    <domain>
        <recommendedName>
            <fullName evidence="1">Glucosamine-1-phosphate N-acetyltransferase</fullName>
            <ecNumber evidence="1">2.3.1.157</ecNumber>
        </recommendedName>
    </domain>
</protein>
<accession>A2RG45</accession>
<organism>
    <name type="scientific">Streptococcus pyogenes serotype M5 (strain Manfredo)</name>
    <dbReference type="NCBI Taxonomy" id="160491"/>
    <lineage>
        <taxon>Bacteria</taxon>
        <taxon>Bacillati</taxon>
        <taxon>Bacillota</taxon>
        <taxon>Bacilli</taxon>
        <taxon>Lactobacillales</taxon>
        <taxon>Streptococcaceae</taxon>
        <taxon>Streptococcus</taxon>
    </lineage>
</organism>
<name>GLMU_STRPG</name>
<keyword id="KW-0012">Acyltransferase</keyword>
<keyword id="KW-0133">Cell shape</keyword>
<keyword id="KW-0961">Cell wall biogenesis/degradation</keyword>
<keyword id="KW-0963">Cytoplasm</keyword>
<keyword id="KW-0460">Magnesium</keyword>
<keyword id="KW-0479">Metal-binding</keyword>
<keyword id="KW-0511">Multifunctional enzyme</keyword>
<keyword id="KW-0548">Nucleotidyltransferase</keyword>
<keyword id="KW-0573">Peptidoglycan synthesis</keyword>
<keyword id="KW-0677">Repeat</keyword>
<keyword id="KW-0808">Transferase</keyword>
<proteinExistence type="inferred from homology"/>
<sequence>MTNYAIILAAGKGTRMTSDLPKVLHKVSGLTMLEHVFRSVKAISPEKAVTVIGHKSEKVRAVLADQSAFVHQTEQLGTGHAVMMAETQLEGLEGHTLVIAGDTPLITGESLKSLIDFHVNHKNVATILTATAQDPFGYGRIVRNKDGEVIKIVEQKDANEYEQQLKEINTGTYVFDNKRLFEALKCITTNNAQGEYYLTDVVAIFRANKEKVGAYILRDFNESLGVNDRVALATAETVMRQRITQKHMVNGVTFQNPETVYIESDVEIAPDVLIEGNVTLKGRTHIGSGTVLTNGTYIVDSEIGQGSIITNSMIESSVLAAGVTVGPYAHLRPGTTLDREVHIGNFVEVKGSHIGEKTKAGHLTYIGNAQVGSSVNVGAGTITVNYDGQNKYETVIGDHAFIGSNSTLIAPLEVGDNALTAAGSTISKTVPADSIVIGRSRQVTKEGYAKRLAHHPSRSK</sequence>
<dbReference type="EC" id="2.7.7.23" evidence="1"/>
<dbReference type="EC" id="2.3.1.157" evidence="1"/>
<dbReference type="EMBL" id="AM295007">
    <property type="protein sequence ID" value="CAM30824.1"/>
    <property type="molecule type" value="Genomic_DNA"/>
</dbReference>
<dbReference type="RefSeq" id="WP_011889106.1">
    <property type="nucleotide sequence ID" value="NC_009332.1"/>
</dbReference>
<dbReference type="SMR" id="A2RG45"/>
<dbReference type="KEGG" id="spf:SpyM51503"/>
<dbReference type="HOGENOM" id="CLU_029499_15_2_9"/>
<dbReference type="UniPathway" id="UPA00113">
    <property type="reaction ID" value="UER00532"/>
</dbReference>
<dbReference type="UniPathway" id="UPA00113">
    <property type="reaction ID" value="UER00533"/>
</dbReference>
<dbReference type="UniPathway" id="UPA00973"/>
<dbReference type="GO" id="GO:0005737">
    <property type="term" value="C:cytoplasm"/>
    <property type="evidence" value="ECO:0007669"/>
    <property type="project" value="UniProtKB-SubCell"/>
</dbReference>
<dbReference type="GO" id="GO:0016020">
    <property type="term" value="C:membrane"/>
    <property type="evidence" value="ECO:0007669"/>
    <property type="project" value="GOC"/>
</dbReference>
<dbReference type="GO" id="GO:0019134">
    <property type="term" value="F:glucosamine-1-phosphate N-acetyltransferase activity"/>
    <property type="evidence" value="ECO:0007669"/>
    <property type="project" value="UniProtKB-UniRule"/>
</dbReference>
<dbReference type="GO" id="GO:0000287">
    <property type="term" value="F:magnesium ion binding"/>
    <property type="evidence" value="ECO:0007669"/>
    <property type="project" value="UniProtKB-UniRule"/>
</dbReference>
<dbReference type="GO" id="GO:0003977">
    <property type="term" value="F:UDP-N-acetylglucosamine diphosphorylase activity"/>
    <property type="evidence" value="ECO:0007669"/>
    <property type="project" value="UniProtKB-UniRule"/>
</dbReference>
<dbReference type="GO" id="GO:0000902">
    <property type="term" value="P:cell morphogenesis"/>
    <property type="evidence" value="ECO:0007669"/>
    <property type="project" value="UniProtKB-UniRule"/>
</dbReference>
<dbReference type="GO" id="GO:0071555">
    <property type="term" value="P:cell wall organization"/>
    <property type="evidence" value="ECO:0007669"/>
    <property type="project" value="UniProtKB-KW"/>
</dbReference>
<dbReference type="GO" id="GO:0009245">
    <property type="term" value="P:lipid A biosynthetic process"/>
    <property type="evidence" value="ECO:0007669"/>
    <property type="project" value="UniProtKB-UniRule"/>
</dbReference>
<dbReference type="GO" id="GO:0009252">
    <property type="term" value="P:peptidoglycan biosynthetic process"/>
    <property type="evidence" value="ECO:0007669"/>
    <property type="project" value="UniProtKB-UniRule"/>
</dbReference>
<dbReference type="GO" id="GO:0008360">
    <property type="term" value="P:regulation of cell shape"/>
    <property type="evidence" value="ECO:0007669"/>
    <property type="project" value="UniProtKB-KW"/>
</dbReference>
<dbReference type="GO" id="GO:0006048">
    <property type="term" value="P:UDP-N-acetylglucosamine biosynthetic process"/>
    <property type="evidence" value="ECO:0007669"/>
    <property type="project" value="UniProtKB-UniPathway"/>
</dbReference>
<dbReference type="CDD" id="cd02540">
    <property type="entry name" value="GT2_GlmU_N_bac"/>
    <property type="match status" value="1"/>
</dbReference>
<dbReference type="CDD" id="cd03353">
    <property type="entry name" value="LbH_GlmU_C"/>
    <property type="match status" value="1"/>
</dbReference>
<dbReference type="Gene3D" id="2.160.10.10">
    <property type="entry name" value="Hexapeptide repeat proteins"/>
    <property type="match status" value="1"/>
</dbReference>
<dbReference type="Gene3D" id="3.90.550.10">
    <property type="entry name" value="Spore Coat Polysaccharide Biosynthesis Protein SpsA, Chain A"/>
    <property type="match status" value="1"/>
</dbReference>
<dbReference type="HAMAP" id="MF_01631">
    <property type="entry name" value="GlmU"/>
    <property type="match status" value="1"/>
</dbReference>
<dbReference type="InterPro" id="IPR005882">
    <property type="entry name" value="Bifunctional_GlmU"/>
</dbReference>
<dbReference type="InterPro" id="IPR050065">
    <property type="entry name" value="GlmU-like"/>
</dbReference>
<dbReference type="InterPro" id="IPR038009">
    <property type="entry name" value="GlmU_C_LbH"/>
</dbReference>
<dbReference type="InterPro" id="IPR001451">
    <property type="entry name" value="Hexapep"/>
</dbReference>
<dbReference type="InterPro" id="IPR005835">
    <property type="entry name" value="NTP_transferase_dom"/>
</dbReference>
<dbReference type="InterPro" id="IPR029044">
    <property type="entry name" value="Nucleotide-diphossugar_trans"/>
</dbReference>
<dbReference type="InterPro" id="IPR011004">
    <property type="entry name" value="Trimer_LpxA-like_sf"/>
</dbReference>
<dbReference type="NCBIfam" id="TIGR01173">
    <property type="entry name" value="glmU"/>
    <property type="match status" value="1"/>
</dbReference>
<dbReference type="NCBIfam" id="NF010934">
    <property type="entry name" value="PRK14354.1"/>
    <property type="match status" value="1"/>
</dbReference>
<dbReference type="PANTHER" id="PTHR43584:SF3">
    <property type="entry name" value="BIFUNCTIONAL PROTEIN GLMU"/>
    <property type="match status" value="1"/>
</dbReference>
<dbReference type="PANTHER" id="PTHR43584">
    <property type="entry name" value="NUCLEOTIDYL TRANSFERASE"/>
    <property type="match status" value="1"/>
</dbReference>
<dbReference type="Pfam" id="PF00132">
    <property type="entry name" value="Hexapep"/>
    <property type="match status" value="1"/>
</dbReference>
<dbReference type="Pfam" id="PF00483">
    <property type="entry name" value="NTP_transferase"/>
    <property type="match status" value="1"/>
</dbReference>
<dbReference type="SUPFAM" id="SSF53448">
    <property type="entry name" value="Nucleotide-diphospho-sugar transferases"/>
    <property type="match status" value="1"/>
</dbReference>
<dbReference type="SUPFAM" id="SSF51161">
    <property type="entry name" value="Trimeric LpxA-like enzymes"/>
    <property type="match status" value="1"/>
</dbReference>
<evidence type="ECO:0000255" key="1">
    <source>
        <dbReference type="HAMAP-Rule" id="MF_01631"/>
    </source>
</evidence>
<comment type="function">
    <text evidence="1">Catalyzes the last two sequential reactions in the de novo biosynthetic pathway for UDP-N-acetylglucosamine (UDP-GlcNAc). The C-terminal domain catalyzes the transfer of acetyl group from acetyl coenzyme A to glucosamine-1-phosphate (GlcN-1-P) to produce N-acetylglucosamine-1-phosphate (GlcNAc-1-P), which is converted into UDP-GlcNAc by the transfer of uridine 5-monophosphate (from uridine 5-triphosphate), a reaction catalyzed by the N-terminal domain.</text>
</comment>
<comment type="catalytic activity">
    <reaction evidence="1">
        <text>alpha-D-glucosamine 1-phosphate + acetyl-CoA = N-acetyl-alpha-D-glucosamine 1-phosphate + CoA + H(+)</text>
        <dbReference type="Rhea" id="RHEA:13725"/>
        <dbReference type="ChEBI" id="CHEBI:15378"/>
        <dbReference type="ChEBI" id="CHEBI:57287"/>
        <dbReference type="ChEBI" id="CHEBI:57288"/>
        <dbReference type="ChEBI" id="CHEBI:57776"/>
        <dbReference type="ChEBI" id="CHEBI:58516"/>
        <dbReference type="EC" id="2.3.1.157"/>
    </reaction>
</comment>
<comment type="catalytic activity">
    <reaction evidence="1">
        <text>N-acetyl-alpha-D-glucosamine 1-phosphate + UTP + H(+) = UDP-N-acetyl-alpha-D-glucosamine + diphosphate</text>
        <dbReference type="Rhea" id="RHEA:13509"/>
        <dbReference type="ChEBI" id="CHEBI:15378"/>
        <dbReference type="ChEBI" id="CHEBI:33019"/>
        <dbReference type="ChEBI" id="CHEBI:46398"/>
        <dbReference type="ChEBI" id="CHEBI:57705"/>
        <dbReference type="ChEBI" id="CHEBI:57776"/>
        <dbReference type="EC" id="2.7.7.23"/>
    </reaction>
</comment>
<comment type="cofactor">
    <cofactor evidence="1">
        <name>Mg(2+)</name>
        <dbReference type="ChEBI" id="CHEBI:18420"/>
    </cofactor>
    <text evidence="1">Binds 1 Mg(2+) ion per subunit.</text>
</comment>
<comment type="pathway">
    <text evidence="1">Nucleotide-sugar biosynthesis; UDP-N-acetyl-alpha-D-glucosamine biosynthesis; N-acetyl-alpha-D-glucosamine 1-phosphate from alpha-D-glucosamine 6-phosphate (route II): step 2/2.</text>
</comment>
<comment type="pathway">
    <text evidence="1">Nucleotide-sugar biosynthesis; UDP-N-acetyl-alpha-D-glucosamine biosynthesis; UDP-N-acetyl-alpha-D-glucosamine from N-acetyl-alpha-D-glucosamine 1-phosphate: step 1/1.</text>
</comment>
<comment type="pathway">
    <text evidence="1">Bacterial outer membrane biogenesis; LPS lipid A biosynthesis.</text>
</comment>
<comment type="subunit">
    <text evidence="1">Homotrimer.</text>
</comment>
<comment type="subcellular location">
    <subcellularLocation>
        <location evidence="1">Cytoplasm</location>
    </subcellularLocation>
</comment>
<comment type="similarity">
    <text evidence="1">In the N-terminal section; belongs to the N-acetylglucosamine-1-phosphate uridyltransferase family.</text>
</comment>
<comment type="similarity">
    <text evidence="1">In the C-terminal section; belongs to the transferase hexapeptide repeat family.</text>
</comment>
<gene>
    <name evidence="1" type="primary">glmU</name>
    <name type="ordered locus">SpyM51503</name>
</gene>